<reference evidence="6" key="1">
    <citation type="journal article" date="2005" name="Science">
        <title>The transcriptional landscape of the mammalian genome.</title>
        <authorList>
            <person name="Carninci P."/>
            <person name="Kasukawa T."/>
            <person name="Katayama S."/>
            <person name="Gough J."/>
            <person name="Frith M.C."/>
            <person name="Maeda N."/>
            <person name="Oyama R."/>
            <person name="Ravasi T."/>
            <person name="Lenhard B."/>
            <person name="Wells C."/>
            <person name="Kodzius R."/>
            <person name="Shimokawa K."/>
            <person name="Bajic V.B."/>
            <person name="Brenner S.E."/>
            <person name="Batalov S."/>
            <person name="Forrest A.R."/>
            <person name="Zavolan M."/>
            <person name="Davis M.J."/>
            <person name="Wilming L.G."/>
            <person name="Aidinis V."/>
            <person name="Allen J.E."/>
            <person name="Ambesi-Impiombato A."/>
            <person name="Apweiler R."/>
            <person name="Aturaliya R.N."/>
            <person name="Bailey T.L."/>
            <person name="Bansal M."/>
            <person name="Baxter L."/>
            <person name="Beisel K.W."/>
            <person name="Bersano T."/>
            <person name="Bono H."/>
            <person name="Chalk A.M."/>
            <person name="Chiu K.P."/>
            <person name="Choudhary V."/>
            <person name="Christoffels A."/>
            <person name="Clutterbuck D.R."/>
            <person name="Crowe M.L."/>
            <person name="Dalla E."/>
            <person name="Dalrymple B.P."/>
            <person name="de Bono B."/>
            <person name="Della Gatta G."/>
            <person name="di Bernardo D."/>
            <person name="Down T."/>
            <person name="Engstrom P."/>
            <person name="Fagiolini M."/>
            <person name="Faulkner G."/>
            <person name="Fletcher C.F."/>
            <person name="Fukushima T."/>
            <person name="Furuno M."/>
            <person name="Futaki S."/>
            <person name="Gariboldi M."/>
            <person name="Georgii-Hemming P."/>
            <person name="Gingeras T.R."/>
            <person name="Gojobori T."/>
            <person name="Green R.E."/>
            <person name="Gustincich S."/>
            <person name="Harbers M."/>
            <person name="Hayashi Y."/>
            <person name="Hensch T.K."/>
            <person name="Hirokawa N."/>
            <person name="Hill D."/>
            <person name="Huminiecki L."/>
            <person name="Iacono M."/>
            <person name="Ikeo K."/>
            <person name="Iwama A."/>
            <person name="Ishikawa T."/>
            <person name="Jakt M."/>
            <person name="Kanapin A."/>
            <person name="Katoh M."/>
            <person name="Kawasawa Y."/>
            <person name="Kelso J."/>
            <person name="Kitamura H."/>
            <person name="Kitano H."/>
            <person name="Kollias G."/>
            <person name="Krishnan S.P."/>
            <person name="Kruger A."/>
            <person name="Kummerfeld S.K."/>
            <person name="Kurochkin I.V."/>
            <person name="Lareau L.F."/>
            <person name="Lazarevic D."/>
            <person name="Lipovich L."/>
            <person name="Liu J."/>
            <person name="Liuni S."/>
            <person name="McWilliam S."/>
            <person name="Madan Babu M."/>
            <person name="Madera M."/>
            <person name="Marchionni L."/>
            <person name="Matsuda H."/>
            <person name="Matsuzawa S."/>
            <person name="Miki H."/>
            <person name="Mignone F."/>
            <person name="Miyake S."/>
            <person name="Morris K."/>
            <person name="Mottagui-Tabar S."/>
            <person name="Mulder N."/>
            <person name="Nakano N."/>
            <person name="Nakauchi H."/>
            <person name="Ng P."/>
            <person name="Nilsson R."/>
            <person name="Nishiguchi S."/>
            <person name="Nishikawa S."/>
            <person name="Nori F."/>
            <person name="Ohara O."/>
            <person name="Okazaki Y."/>
            <person name="Orlando V."/>
            <person name="Pang K.C."/>
            <person name="Pavan W.J."/>
            <person name="Pavesi G."/>
            <person name="Pesole G."/>
            <person name="Petrovsky N."/>
            <person name="Piazza S."/>
            <person name="Reed J."/>
            <person name="Reid J.F."/>
            <person name="Ring B.Z."/>
            <person name="Ringwald M."/>
            <person name="Rost B."/>
            <person name="Ruan Y."/>
            <person name="Salzberg S.L."/>
            <person name="Sandelin A."/>
            <person name="Schneider C."/>
            <person name="Schoenbach C."/>
            <person name="Sekiguchi K."/>
            <person name="Semple C.A."/>
            <person name="Seno S."/>
            <person name="Sessa L."/>
            <person name="Sheng Y."/>
            <person name="Shibata Y."/>
            <person name="Shimada H."/>
            <person name="Shimada K."/>
            <person name="Silva D."/>
            <person name="Sinclair B."/>
            <person name="Sperling S."/>
            <person name="Stupka E."/>
            <person name="Sugiura K."/>
            <person name="Sultana R."/>
            <person name="Takenaka Y."/>
            <person name="Taki K."/>
            <person name="Tammoja K."/>
            <person name="Tan S.L."/>
            <person name="Tang S."/>
            <person name="Taylor M.S."/>
            <person name="Tegner J."/>
            <person name="Teichmann S.A."/>
            <person name="Ueda H.R."/>
            <person name="van Nimwegen E."/>
            <person name="Verardo R."/>
            <person name="Wei C.L."/>
            <person name="Yagi K."/>
            <person name="Yamanishi H."/>
            <person name="Zabarovsky E."/>
            <person name="Zhu S."/>
            <person name="Zimmer A."/>
            <person name="Hide W."/>
            <person name="Bult C."/>
            <person name="Grimmond S.M."/>
            <person name="Teasdale R.D."/>
            <person name="Liu E.T."/>
            <person name="Brusic V."/>
            <person name="Quackenbush J."/>
            <person name="Wahlestedt C."/>
            <person name="Mattick J.S."/>
            <person name="Hume D.A."/>
            <person name="Kai C."/>
            <person name="Sasaki D."/>
            <person name="Tomaru Y."/>
            <person name="Fukuda S."/>
            <person name="Kanamori-Katayama M."/>
            <person name="Suzuki M."/>
            <person name="Aoki J."/>
            <person name="Arakawa T."/>
            <person name="Iida J."/>
            <person name="Imamura K."/>
            <person name="Itoh M."/>
            <person name="Kato T."/>
            <person name="Kawaji H."/>
            <person name="Kawagashira N."/>
            <person name="Kawashima T."/>
            <person name="Kojima M."/>
            <person name="Kondo S."/>
            <person name="Konno H."/>
            <person name="Nakano K."/>
            <person name="Ninomiya N."/>
            <person name="Nishio T."/>
            <person name="Okada M."/>
            <person name="Plessy C."/>
            <person name="Shibata K."/>
            <person name="Shiraki T."/>
            <person name="Suzuki S."/>
            <person name="Tagami M."/>
            <person name="Waki K."/>
            <person name="Watahiki A."/>
            <person name="Okamura-Oho Y."/>
            <person name="Suzuki H."/>
            <person name="Kawai J."/>
            <person name="Hayashizaki Y."/>
        </authorList>
    </citation>
    <scope>NUCLEOTIDE SEQUENCE [LARGE SCALE MRNA]</scope>
    <source>
        <strain evidence="6">C57BL/6J</strain>
        <tissue evidence="6">Liver tumor</tissue>
    </source>
</reference>
<reference evidence="7" key="2">
    <citation type="submission" date="2005-09" db="EMBL/GenBank/DDBJ databases">
        <authorList>
            <person name="Mural R.J."/>
            <person name="Adams M.D."/>
            <person name="Myers E.W."/>
            <person name="Smith H.O."/>
            <person name="Venter J.C."/>
        </authorList>
    </citation>
    <scope>NUCLEOTIDE SEQUENCE [LARGE SCALE GENOMIC DNA]</scope>
</reference>
<reference evidence="5" key="3">
    <citation type="journal article" date="2004" name="Genome Res.">
        <title>The status, quality, and expansion of the NIH full-length cDNA project: the Mammalian Gene Collection (MGC).</title>
        <authorList>
            <consortium name="The MGC Project Team"/>
        </authorList>
    </citation>
    <scope>NUCLEOTIDE SEQUENCE [LARGE SCALE MRNA]</scope>
    <source>
        <strain evidence="4">C57BL/6J</strain>
        <tissue evidence="4">Egg</tissue>
    </source>
</reference>
<comment type="function">
    <text evidence="1">Could be involved with bystin and trophinin in a cell adhesion molecule complex that mediates an initial attachment of the blastocyst to uterine epithelial cells at the time of the embryo implantation.</text>
</comment>
<comment type="subunit">
    <text evidence="1">Directly binds bystin, and indirectly trophinin.</text>
</comment>
<comment type="subcellular location">
    <subcellularLocation>
        <location evidence="1">Cytoplasm</location>
    </subcellularLocation>
</comment>
<comment type="sequence caution" evidence="3">
    <conflict type="erroneous initiation">
        <sequence resource="EMBL-CDS" id="AAI00406"/>
    </conflict>
    <text>Extended N-terminus.</text>
</comment>
<keyword id="KW-0130">Cell adhesion</keyword>
<keyword id="KW-0963">Cytoplasm</keyword>
<keyword id="KW-0597">Phosphoprotein</keyword>
<keyword id="KW-1185">Reference proteome</keyword>
<sequence>MTTLQTNKDPHLRGVSPNPSKIPVLSQRCQDFSSVKSRSLDQENQDPRTPAQKPPRSTQRQRPLTDTAGLRSKTLHQTEKSPSLKTLRNPLEELKPSSGGSNVGLVTHPQTEAIGAIEFVADPAALATILSGEGVKSCPQGYRSSLAQRVLVRERKGGTTQRGQSARSSAYLAPRIPTHQVGPARASCFSRLEGPGLRDHTLSPPRLEALNPPPGSSHSSTRPSLQELRRETCGGGRDGDCTDRRTSASQASRLLLKTPVQPASLPLRGEQEAVPHSDDGGGRHHLGLAQRIPLKESLTNTRSTYSSMKRFAIRRKAQFTPLRSLPKVQQAQWLSGLSPHSSPEEPALPWRQIAMKLFDQESRITLQKEPRKPSVASTSGPRPKRTPSHQELRIQRINILQQLLQQEVEGLAMGDGAPLNGGSAFDMTELKLPTAEISRTLTASEHNSGAALVGLSQHSGATEPLLSEECEEPQAYPEETKAAQPCSTTELKPPVPHRAEPELPEPCLPALSGPPLPSCRGQAEPPMACPRTEPGASAACALEAGTPESSTQPCCNQGPPATASLTFSSQSPVCASPSIHSLYPTGYSGPSSLAPRTLALRQRLRACLDTIHSFQEAHLDDECAFYTSRAPPPGPTRVFTNPVVTTLEWQDALRFVPIGPVVPQDSPS</sequence>
<feature type="chain" id="PRO_0000394294" description="Tastin">
    <location>
        <begin position="1"/>
        <end position="668"/>
    </location>
</feature>
<feature type="region of interest" description="Disordered" evidence="2">
    <location>
        <begin position="1"/>
        <end position="102"/>
    </location>
</feature>
<feature type="region of interest" description="Disordered" evidence="2">
    <location>
        <begin position="154"/>
        <end position="177"/>
    </location>
</feature>
<feature type="region of interest" description="Disordered" evidence="2">
    <location>
        <begin position="189"/>
        <end position="285"/>
    </location>
</feature>
<feature type="region of interest" description="Disordered" evidence="2">
    <location>
        <begin position="364"/>
        <end position="392"/>
    </location>
</feature>
<feature type="region of interest" description="Disordered" evidence="2">
    <location>
        <begin position="462"/>
        <end position="502"/>
    </location>
</feature>
<feature type="compositionally biased region" description="Polar residues" evidence="2">
    <location>
        <begin position="27"/>
        <end position="37"/>
    </location>
</feature>
<feature type="compositionally biased region" description="Polar residues" evidence="2">
    <location>
        <begin position="55"/>
        <end position="64"/>
    </location>
</feature>
<feature type="compositionally biased region" description="Polar residues" evidence="2">
    <location>
        <begin position="158"/>
        <end position="168"/>
    </location>
</feature>
<feature type="compositionally biased region" description="Basic and acidic residues" evidence="2">
    <location>
        <begin position="227"/>
        <end position="246"/>
    </location>
</feature>
<feature type="compositionally biased region" description="Basic and acidic residues" evidence="2">
    <location>
        <begin position="269"/>
        <end position="282"/>
    </location>
</feature>
<feature type="modified residue" description="Phosphoserine" evidence="1">
    <location>
        <position position="16"/>
    </location>
</feature>
<feature type="modified residue" description="Phosphoserine" evidence="1">
    <location>
        <position position="97"/>
    </location>
</feature>
<feature type="modified residue" description="Phosphoserine" evidence="1">
    <location>
        <position position="169"/>
    </location>
</feature>
<feature type="modified residue" description="Phosphoserine" evidence="1">
    <location>
        <position position="306"/>
    </location>
</feature>
<feature type="modified residue" description="Phosphoserine" evidence="1">
    <location>
        <position position="324"/>
    </location>
</feature>
<feature type="modified residue" description="Phosphoserine" evidence="1">
    <location>
        <position position="338"/>
    </location>
</feature>
<feature type="sequence conflict" description="In Ref. 1; BAC34223." evidence="3" ref="1">
    <original>K</original>
    <variation>E</variation>
    <location>
        <position position="95"/>
    </location>
</feature>
<feature type="sequence conflict" description="In Ref. 1; BAC34223." evidence="3" ref="1">
    <original>P</original>
    <variation>S</variation>
    <location>
        <position position="464"/>
    </location>
</feature>
<name>TROAP_MOUSE</name>
<dbReference type="EMBL" id="AK050381">
    <property type="protein sequence ID" value="BAC34223.1"/>
    <property type="molecule type" value="mRNA"/>
</dbReference>
<dbReference type="EMBL" id="CH466550">
    <property type="protein sequence ID" value="EDL04145.1"/>
    <property type="molecule type" value="Genomic_DNA"/>
</dbReference>
<dbReference type="EMBL" id="BC100405">
    <property type="protein sequence ID" value="AAI00406.1"/>
    <property type="status" value="ALT_INIT"/>
    <property type="molecule type" value="mRNA"/>
</dbReference>
<dbReference type="EMBL" id="BC145227">
    <property type="protein sequence ID" value="AAI45228.1"/>
    <property type="molecule type" value="mRNA"/>
</dbReference>
<dbReference type="CCDS" id="CCDS57008.1"/>
<dbReference type="RefSeq" id="NP_001155978.1">
    <property type="nucleotide sequence ID" value="NM_001162506.1"/>
</dbReference>
<dbReference type="RefSeq" id="NP_084435.1">
    <property type="nucleotide sequence ID" value="NM_030159.1"/>
</dbReference>
<dbReference type="BioGRID" id="219599">
    <property type="interactions" value="5"/>
</dbReference>
<dbReference type="FunCoup" id="B7ZNG4">
    <property type="interactions" value="53"/>
</dbReference>
<dbReference type="STRING" id="10090.ENSMUSP00000155404"/>
<dbReference type="GlyGen" id="B7ZNG4">
    <property type="glycosylation" value="1 site"/>
</dbReference>
<dbReference type="iPTMnet" id="B7ZNG4"/>
<dbReference type="PhosphoSitePlus" id="B7ZNG4"/>
<dbReference type="PaxDb" id="10090-ENSMUSP00000035389"/>
<dbReference type="ProteomicsDB" id="258984"/>
<dbReference type="Pumba" id="B7ZNG4"/>
<dbReference type="Antibodypedia" id="25932">
    <property type="antibodies" value="79 antibodies from 19 providers"/>
</dbReference>
<dbReference type="Ensembl" id="ENSMUST00000039665.8">
    <property type="protein sequence ID" value="ENSMUSP00000035389.7"/>
    <property type="gene ID" value="ENSMUSG00000032783.10"/>
</dbReference>
<dbReference type="Ensembl" id="ENSMUST00000230054.2">
    <property type="protein sequence ID" value="ENSMUSP00000155404.2"/>
    <property type="gene ID" value="ENSMUSG00000032783.10"/>
</dbReference>
<dbReference type="GeneID" id="78733"/>
<dbReference type="KEGG" id="mmu:78733"/>
<dbReference type="UCSC" id="uc007xor.2">
    <property type="organism name" value="mouse"/>
</dbReference>
<dbReference type="AGR" id="MGI:1925983"/>
<dbReference type="CTD" id="10024"/>
<dbReference type="MGI" id="MGI:1925983">
    <property type="gene designation" value="Troap"/>
</dbReference>
<dbReference type="VEuPathDB" id="HostDB:ENSMUSG00000032783"/>
<dbReference type="eggNOG" id="ENOG502S991">
    <property type="taxonomic scope" value="Eukaryota"/>
</dbReference>
<dbReference type="GeneTree" id="ENSGT00390000012132"/>
<dbReference type="HOGENOM" id="CLU_020167_0_0_1"/>
<dbReference type="InParanoid" id="B7ZNG4"/>
<dbReference type="OMA" id="YEGCLDD"/>
<dbReference type="OrthoDB" id="8722817at2759"/>
<dbReference type="PhylomeDB" id="B7ZNG4"/>
<dbReference type="TreeFam" id="TF338049"/>
<dbReference type="BioGRID-ORCS" id="78733">
    <property type="hits" value="5 hits in 79 CRISPR screens"/>
</dbReference>
<dbReference type="ChiTaRS" id="Troap">
    <property type="organism name" value="mouse"/>
</dbReference>
<dbReference type="PRO" id="PR:B7ZNG4"/>
<dbReference type="Proteomes" id="UP000000589">
    <property type="component" value="Chromosome 15"/>
</dbReference>
<dbReference type="RNAct" id="B7ZNG4">
    <property type="molecule type" value="protein"/>
</dbReference>
<dbReference type="Bgee" id="ENSMUSG00000032783">
    <property type="expression patterns" value="Expressed in humerus cartilage element and 76 other cell types or tissues"/>
</dbReference>
<dbReference type="GO" id="GO:0005737">
    <property type="term" value="C:cytoplasm"/>
    <property type="evidence" value="ECO:0007669"/>
    <property type="project" value="UniProtKB-SubCell"/>
</dbReference>
<dbReference type="GO" id="GO:0007155">
    <property type="term" value="P:cell adhesion"/>
    <property type="evidence" value="ECO:0007669"/>
    <property type="project" value="UniProtKB-KW"/>
</dbReference>
<dbReference type="InterPro" id="IPR026133">
    <property type="entry name" value="Tastin"/>
</dbReference>
<dbReference type="PANTHER" id="PTHR15289">
    <property type="entry name" value="TASTIN"/>
    <property type="match status" value="1"/>
</dbReference>
<dbReference type="PANTHER" id="PTHR15289:SF3">
    <property type="entry name" value="TASTIN"/>
    <property type="match status" value="1"/>
</dbReference>
<accession>B7ZNG4</accession>
<accession>Q497S4</accession>
<accession>Q8BWP3</accession>
<organism>
    <name type="scientific">Mus musculus</name>
    <name type="common">Mouse</name>
    <dbReference type="NCBI Taxonomy" id="10090"/>
    <lineage>
        <taxon>Eukaryota</taxon>
        <taxon>Metazoa</taxon>
        <taxon>Chordata</taxon>
        <taxon>Craniata</taxon>
        <taxon>Vertebrata</taxon>
        <taxon>Euteleostomi</taxon>
        <taxon>Mammalia</taxon>
        <taxon>Eutheria</taxon>
        <taxon>Euarchontoglires</taxon>
        <taxon>Glires</taxon>
        <taxon>Rodentia</taxon>
        <taxon>Myomorpha</taxon>
        <taxon>Muroidea</taxon>
        <taxon>Muridae</taxon>
        <taxon>Murinae</taxon>
        <taxon>Mus</taxon>
        <taxon>Mus</taxon>
    </lineage>
</organism>
<gene>
    <name evidence="5 8" type="primary">Troap</name>
</gene>
<evidence type="ECO:0000250" key="1">
    <source>
        <dbReference type="UniProtKB" id="Q12815"/>
    </source>
</evidence>
<evidence type="ECO:0000256" key="2">
    <source>
        <dbReference type="SAM" id="MobiDB-lite"/>
    </source>
</evidence>
<evidence type="ECO:0000305" key="3"/>
<evidence type="ECO:0000312" key="4">
    <source>
        <dbReference type="EMBL" id="AAI00406.1"/>
    </source>
</evidence>
<evidence type="ECO:0000312" key="5">
    <source>
        <dbReference type="EMBL" id="AAI45228.1"/>
    </source>
</evidence>
<evidence type="ECO:0000312" key="6">
    <source>
        <dbReference type="EMBL" id="BAC34223.1"/>
    </source>
</evidence>
<evidence type="ECO:0000312" key="7">
    <source>
        <dbReference type="EMBL" id="EDL04145.1"/>
    </source>
</evidence>
<evidence type="ECO:0000312" key="8">
    <source>
        <dbReference type="MGI" id="MGI:1925983"/>
    </source>
</evidence>
<protein>
    <recommendedName>
        <fullName evidence="1">Tastin</fullName>
    </recommendedName>
    <alternativeName>
        <fullName evidence="5">Troap protein</fullName>
    </alternativeName>
    <alternativeName>
        <fullName evidence="1">Trophinin-assisting protein</fullName>
    </alternativeName>
    <alternativeName>
        <fullName evidence="1">Trophinin-associated protein</fullName>
    </alternativeName>
</protein>
<proteinExistence type="evidence at transcript level"/>